<reference key="1">
    <citation type="journal article" date="2003" name="Proc. Natl. Acad. Sci. U.S.A.">
        <title>Complete genome sequence of the Q-fever pathogen, Coxiella burnetii.</title>
        <authorList>
            <person name="Seshadri R."/>
            <person name="Paulsen I.T."/>
            <person name="Eisen J.A."/>
            <person name="Read T.D."/>
            <person name="Nelson K.E."/>
            <person name="Nelson W.C."/>
            <person name="Ward N.L."/>
            <person name="Tettelin H."/>
            <person name="Davidsen T.M."/>
            <person name="Beanan M.J."/>
            <person name="DeBoy R.T."/>
            <person name="Daugherty S.C."/>
            <person name="Brinkac L.M."/>
            <person name="Madupu R."/>
            <person name="Dodson R.J."/>
            <person name="Khouri H.M."/>
            <person name="Lee K.H."/>
            <person name="Carty H.A."/>
            <person name="Scanlan D."/>
            <person name="Heinzen R.A."/>
            <person name="Thompson H.A."/>
            <person name="Samuel J.E."/>
            <person name="Fraser C.M."/>
            <person name="Heidelberg J.F."/>
        </authorList>
    </citation>
    <scope>NUCLEOTIDE SEQUENCE [LARGE SCALE GENOMIC DNA]</scope>
    <source>
        <strain>RSA 493 / Nine Mile phase I</strain>
    </source>
</reference>
<proteinExistence type="evidence at protein level"/>
<accession>Q83EL7</accession>
<organism>
    <name type="scientific">Coxiella burnetii (strain RSA 493 / Nine Mile phase I)</name>
    <dbReference type="NCBI Taxonomy" id="227377"/>
    <lineage>
        <taxon>Bacteria</taxon>
        <taxon>Pseudomonadati</taxon>
        <taxon>Pseudomonadota</taxon>
        <taxon>Gammaproteobacteria</taxon>
        <taxon>Legionellales</taxon>
        <taxon>Coxiellaceae</taxon>
        <taxon>Coxiella</taxon>
    </lineage>
</organism>
<comment type="function">
    <text evidence="1">Essential for recycling GMP and indirectly, cGMP.</text>
</comment>
<comment type="catalytic activity">
    <reaction evidence="1">
        <text>GMP + ATP = GDP + ADP</text>
        <dbReference type="Rhea" id="RHEA:20780"/>
        <dbReference type="ChEBI" id="CHEBI:30616"/>
        <dbReference type="ChEBI" id="CHEBI:58115"/>
        <dbReference type="ChEBI" id="CHEBI:58189"/>
        <dbReference type="ChEBI" id="CHEBI:456216"/>
        <dbReference type="EC" id="2.7.4.8"/>
    </reaction>
</comment>
<comment type="subcellular location">
    <subcellularLocation>
        <location evidence="1">Cytoplasm</location>
    </subcellularLocation>
</comment>
<comment type="similarity">
    <text evidence="1">Belongs to the guanylate kinase family.</text>
</comment>
<keyword id="KW-0002">3D-structure</keyword>
<keyword id="KW-0067">ATP-binding</keyword>
<keyword id="KW-0963">Cytoplasm</keyword>
<keyword id="KW-0418">Kinase</keyword>
<keyword id="KW-0547">Nucleotide-binding</keyword>
<keyword id="KW-1185">Reference proteome</keyword>
<keyword id="KW-0808">Transferase</keyword>
<sequence length="206" mass="23809">MNKANLFIISAPSGAGKTSLVRALVKALAEIKISISHTTRPKRPGDQEGVDYFFIDETRFQAMVKEGAFLEHATIYERHYGTEKDWVLRQLKAGRDVLLEIDWQGARQIRELFPPALSIFILPPSIEALRERLIKRRQDDTAIIEQRLALAREEMAHYKEFDYLVVNDNFDQAVQNLIHIISAERLQRDVQEKKLSRLLAELVEKQ</sequence>
<name>KGUA_COXBU</name>
<feature type="chain" id="PRO_0000170530" description="Guanylate kinase">
    <location>
        <begin position="1"/>
        <end position="206"/>
    </location>
</feature>
<feature type="domain" description="Guanylate kinase-like" evidence="1">
    <location>
        <begin position="4"/>
        <end position="182"/>
    </location>
</feature>
<feature type="binding site" evidence="1">
    <location>
        <begin position="11"/>
        <end position="18"/>
    </location>
    <ligand>
        <name>ATP</name>
        <dbReference type="ChEBI" id="CHEBI:30616"/>
    </ligand>
</feature>
<feature type="strand" evidence="2">
    <location>
        <begin position="6"/>
        <end position="10"/>
    </location>
</feature>
<feature type="helix" evidence="2">
    <location>
        <begin position="17"/>
        <end position="27"/>
    </location>
</feature>
<feature type="strand" evidence="2">
    <location>
        <begin position="28"/>
        <end position="33"/>
    </location>
</feature>
<feature type="turn" evidence="2">
    <location>
        <begin position="48"/>
        <end position="50"/>
    </location>
</feature>
<feature type="helix" evidence="2">
    <location>
        <begin position="57"/>
        <end position="66"/>
    </location>
</feature>
<feature type="strand" evidence="2">
    <location>
        <begin position="69"/>
        <end position="75"/>
    </location>
</feature>
<feature type="strand" evidence="2">
    <location>
        <begin position="78"/>
        <end position="83"/>
    </location>
</feature>
<feature type="helix" evidence="2">
    <location>
        <begin position="84"/>
        <end position="92"/>
    </location>
</feature>
<feature type="strand" evidence="2">
    <location>
        <begin position="96"/>
        <end position="100"/>
    </location>
</feature>
<feature type="helix" evidence="2">
    <location>
        <begin position="103"/>
        <end position="112"/>
    </location>
</feature>
<feature type="strand" evidence="2">
    <location>
        <begin position="117"/>
        <end position="122"/>
    </location>
</feature>
<feature type="helix" evidence="2">
    <location>
        <begin position="126"/>
        <end position="134"/>
    </location>
</feature>
<feature type="helix" evidence="2">
    <location>
        <begin position="144"/>
        <end position="155"/>
    </location>
</feature>
<feature type="helix" evidence="2">
    <location>
        <begin position="156"/>
        <end position="160"/>
    </location>
</feature>
<feature type="strand" evidence="2">
    <location>
        <begin position="162"/>
        <end position="166"/>
    </location>
</feature>
<feature type="helix" evidence="2">
    <location>
        <begin position="170"/>
        <end position="184"/>
    </location>
</feature>
<feature type="helix" evidence="2">
    <location>
        <begin position="188"/>
        <end position="194"/>
    </location>
</feature>
<feature type="helix" evidence="2">
    <location>
        <begin position="196"/>
        <end position="201"/>
    </location>
</feature>
<gene>
    <name evidence="1" type="primary">gmk</name>
    <name type="ordered locus">CBU_0301</name>
</gene>
<dbReference type="EC" id="2.7.4.8" evidence="1"/>
<dbReference type="EMBL" id="AE016828">
    <property type="protein sequence ID" value="AAO89858.1"/>
    <property type="molecule type" value="Genomic_DNA"/>
</dbReference>
<dbReference type="RefSeq" id="NP_819344.1">
    <property type="nucleotide sequence ID" value="NC_002971.4"/>
</dbReference>
<dbReference type="RefSeq" id="WP_005771415.1">
    <property type="nucleotide sequence ID" value="NZ_CDBG01000001.1"/>
</dbReference>
<dbReference type="PDB" id="3TR0">
    <property type="method" value="X-ray"/>
    <property type="resolution" value="1.85 A"/>
    <property type="chains" value="A=1-202"/>
</dbReference>
<dbReference type="PDBsum" id="3TR0"/>
<dbReference type="SMR" id="Q83EL7"/>
<dbReference type="STRING" id="227377.CBU_0301"/>
<dbReference type="DNASU" id="1208183"/>
<dbReference type="EnsemblBacteria" id="AAO89858">
    <property type="protein sequence ID" value="AAO89858"/>
    <property type="gene ID" value="CBU_0301"/>
</dbReference>
<dbReference type="GeneID" id="1208183"/>
<dbReference type="KEGG" id="cbu:CBU_0301"/>
<dbReference type="PATRIC" id="fig|227377.7.peg.296"/>
<dbReference type="eggNOG" id="COG0194">
    <property type="taxonomic scope" value="Bacteria"/>
</dbReference>
<dbReference type="HOGENOM" id="CLU_001715_1_2_6"/>
<dbReference type="OrthoDB" id="9808150at2"/>
<dbReference type="EvolutionaryTrace" id="Q83EL7"/>
<dbReference type="Proteomes" id="UP000002671">
    <property type="component" value="Chromosome"/>
</dbReference>
<dbReference type="GO" id="GO:0005829">
    <property type="term" value="C:cytosol"/>
    <property type="evidence" value="ECO:0000318"/>
    <property type="project" value="GO_Central"/>
</dbReference>
<dbReference type="GO" id="GO:0005524">
    <property type="term" value="F:ATP binding"/>
    <property type="evidence" value="ECO:0007669"/>
    <property type="project" value="UniProtKB-UniRule"/>
</dbReference>
<dbReference type="GO" id="GO:0004385">
    <property type="term" value="F:guanylate kinase activity"/>
    <property type="evidence" value="ECO:0000318"/>
    <property type="project" value="GO_Central"/>
</dbReference>
<dbReference type="CDD" id="cd00071">
    <property type="entry name" value="GMPK"/>
    <property type="match status" value="1"/>
</dbReference>
<dbReference type="FunFam" id="3.30.63.10:FF:000005">
    <property type="entry name" value="Guanylate kinase"/>
    <property type="match status" value="1"/>
</dbReference>
<dbReference type="FunFam" id="3.40.50.300:FF:000084">
    <property type="entry name" value="Guanylate kinase"/>
    <property type="match status" value="1"/>
</dbReference>
<dbReference type="Gene3D" id="3.30.63.10">
    <property type="entry name" value="Guanylate Kinase phosphate binding domain"/>
    <property type="match status" value="1"/>
</dbReference>
<dbReference type="Gene3D" id="3.40.50.300">
    <property type="entry name" value="P-loop containing nucleotide triphosphate hydrolases"/>
    <property type="match status" value="1"/>
</dbReference>
<dbReference type="HAMAP" id="MF_00328">
    <property type="entry name" value="Guanylate_kinase"/>
    <property type="match status" value="1"/>
</dbReference>
<dbReference type="InterPro" id="IPR008145">
    <property type="entry name" value="GK/Ca_channel_bsu"/>
</dbReference>
<dbReference type="InterPro" id="IPR008144">
    <property type="entry name" value="Guanylate_kin-like_dom"/>
</dbReference>
<dbReference type="InterPro" id="IPR017665">
    <property type="entry name" value="Guanylate_kinase"/>
</dbReference>
<dbReference type="InterPro" id="IPR020590">
    <property type="entry name" value="Guanylate_kinase_CS"/>
</dbReference>
<dbReference type="InterPro" id="IPR027417">
    <property type="entry name" value="P-loop_NTPase"/>
</dbReference>
<dbReference type="NCBIfam" id="TIGR03263">
    <property type="entry name" value="guanyl_kin"/>
    <property type="match status" value="1"/>
</dbReference>
<dbReference type="PANTHER" id="PTHR23117:SF13">
    <property type="entry name" value="GUANYLATE KINASE"/>
    <property type="match status" value="1"/>
</dbReference>
<dbReference type="PANTHER" id="PTHR23117">
    <property type="entry name" value="GUANYLATE KINASE-RELATED"/>
    <property type="match status" value="1"/>
</dbReference>
<dbReference type="Pfam" id="PF00625">
    <property type="entry name" value="Guanylate_kin"/>
    <property type="match status" value="1"/>
</dbReference>
<dbReference type="SMART" id="SM00072">
    <property type="entry name" value="GuKc"/>
    <property type="match status" value="1"/>
</dbReference>
<dbReference type="SUPFAM" id="SSF52540">
    <property type="entry name" value="P-loop containing nucleoside triphosphate hydrolases"/>
    <property type="match status" value="1"/>
</dbReference>
<dbReference type="PROSITE" id="PS00856">
    <property type="entry name" value="GUANYLATE_KINASE_1"/>
    <property type="match status" value="1"/>
</dbReference>
<dbReference type="PROSITE" id="PS50052">
    <property type="entry name" value="GUANYLATE_KINASE_2"/>
    <property type="match status" value="1"/>
</dbReference>
<evidence type="ECO:0000255" key="1">
    <source>
        <dbReference type="HAMAP-Rule" id="MF_00328"/>
    </source>
</evidence>
<evidence type="ECO:0007829" key="2">
    <source>
        <dbReference type="PDB" id="3TR0"/>
    </source>
</evidence>
<protein>
    <recommendedName>
        <fullName evidence="1">Guanylate kinase</fullName>
        <ecNumber evidence="1">2.7.4.8</ecNumber>
    </recommendedName>
    <alternativeName>
        <fullName evidence="1">GMP kinase</fullName>
    </alternativeName>
</protein>